<proteinExistence type="evidence at protein level"/>
<dbReference type="EC" id="3.1.2.-" evidence="6"/>
<dbReference type="EC" id="3.1.2.2" evidence="6"/>
<dbReference type="EMBL" id="AF416921">
    <property type="protein sequence ID" value="AAL40937.1"/>
    <property type="molecule type" value="mRNA"/>
</dbReference>
<dbReference type="EMBL" id="AF416922">
    <property type="protein sequence ID" value="AAL40938.1"/>
    <property type="molecule type" value="mRNA"/>
</dbReference>
<dbReference type="EMBL" id="AB014607">
    <property type="protein sequence ID" value="BAA31682.1"/>
    <property type="status" value="ALT_INIT"/>
    <property type="molecule type" value="mRNA"/>
</dbReference>
<dbReference type="EMBL" id="AK023937">
    <property type="protein sequence ID" value="BAB14734.1"/>
    <property type="molecule type" value="mRNA"/>
</dbReference>
<dbReference type="EMBL" id="AK223570">
    <property type="protein sequence ID" value="BAD97290.1"/>
    <property type="molecule type" value="mRNA"/>
</dbReference>
<dbReference type="EMBL" id="AC099796">
    <property type="status" value="NOT_ANNOTATED_CDS"/>
    <property type="molecule type" value="Genomic_DNA"/>
</dbReference>
<dbReference type="EMBL" id="AL590093">
    <property type="status" value="NOT_ANNOTATED_CDS"/>
    <property type="molecule type" value="Genomic_DNA"/>
</dbReference>
<dbReference type="EMBL" id="CH471059">
    <property type="protein sequence ID" value="EAX06682.1"/>
    <property type="molecule type" value="Genomic_DNA"/>
</dbReference>
<dbReference type="EMBL" id="CH471059">
    <property type="protein sequence ID" value="EAX06683.1"/>
    <property type="molecule type" value="Genomic_DNA"/>
</dbReference>
<dbReference type="EMBL" id="CH471059">
    <property type="protein sequence ID" value="EAX06684.1"/>
    <property type="molecule type" value="Genomic_DNA"/>
</dbReference>
<dbReference type="EMBL" id="BC001517">
    <property type="protein sequence ID" value="AAH01517.1"/>
    <property type="molecule type" value="mRNA"/>
</dbReference>
<dbReference type="EMBL" id="BC093844">
    <property type="protein sequence ID" value="AAH93844.1"/>
    <property type="molecule type" value="mRNA"/>
</dbReference>
<dbReference type="EMBL" id="BC093846">
    <property type="protein sequence ID" value="AAH93846.1"/>
    <property type="molecule type" value="mRNA"/>
</dbReference>
<dbReference type="CCDS" id="CCDS592.1">
    <molecule id="Q8WXI4-1"/>
</dbReference>
<dbReference type="CCDS" id="CCDS593.1">
    <molecule id="Q8WXI4-2"/>
</dbReference>
<dbReference type="PIR" id="T00351">
    <property type="entry name" value="T00351"/>
</dbReference>
<dbReference type="RefSeq" id="NP_056362.1">
    <molecule id="Q8WXI4-1"/>
    <property type="nucleotide sequence ID" value="NM_015547.4"/>
</dbReference>
<dbReference type="RefSeq" id="NP_671517.1">
    <molecule id="Q8WXI4-2"/>
    <property type="nucleotide sequence ID" value="NM_147161.4"/>
</dbReference>
<dbReference type="PDB" id="3FO5">
    <property type="method" value="X-ray"/>
    <property type="resolution" value="2.00 A"/>
    <property type="chains" value="A/B=339-543"/>
</dbReference>
<dbReference type="PDB" id="6VVQ">
    <property type="method" value="X-ray"/>
    <property type="resolution" value="3.09 A"/>
    <property type="chains" value="A/B/C/D=339-543"/>
</dbReference>
<dbReference type="PDBsum" id="3FO5"/>
<dbReference type="PDBsum" id="6VVQ"/>
<dbReference type="SMR" id="Q8WXI4"/>
<dbReference type="BioGRID" id="117495">
    <property type="interactions" value="24"/>
</dbReference>
<dbReference type="FunCoup" id="Q8WXI4">
    <property type="interactions" value="125"/>
</dbReference>
<dbReference type="IntAct" id="Q8WXI4">
    <property type="interactions" value="19"/>
</dbReference>
<dbReference type="STRING" id="9606.ENSP00000360366"/>
<dbReference type="SwissLipids" id="SLP:000001186">
    <molecule id="Q8WXI4-2"/>
</dbReference>
<dbReference type="GlyGen" id="Q8WXI4">
    <property type="glycosylation" value="1 site, 1 O-linked glycan (1 site)"/>
</dbReference>
<dbReference type="iPTMnet" id="Q8WXI4"/>
<dbReference type="PhosphoSitePlus" id="Q8WXI4"/>
<dbReference type="SwissPalm" id="Q8WXI4"/>
<dbReference type="BioMuta" id="ACOT11"/>
<dbReference type="DMDM" id="21363000"/>
<dbReference type="jPOST" id="Q8WXI4"/>
<dbReference type="MassIVE" id="Q8WXI4"/>
<dbReference type="PaxDb" id="9606-ENSP00000360366"/>
<dbReference type="PeptideAtlas" id="Q8WXI4"/>
<dbReference type="ProteomicsDB" id="75066">
    <molecule id="Q8WXI4-1"/>
</dbReference>
<dbReference type="ProteomicsDB" id="75067">
    <molecule id="Q8WXI4-2"/>
</dbReference>
<dbReference type="Pumba" id="Q8WXI4"/>
<dbReference type="Antibodypedia" id="33192">
    <property type="antibodies" value="251 antibodies from 30 providers"/>
</dbReference>
<dbReference type="DNASU" id="26027"/>
<dbReference type="Ensembl" id="ENST00000343744.7">
    <molecule id="Q8WXI4-2"/>
    <property type="protein sequence ID" value="ENSP00000340260.2"/>
    <property type="gene ID" value="ENSG00000162390.18"/>
</dbReference>
<dbReference type="Ensembl" id="ENST00000371316.3">
    <molecule id="Q8WXI4-1"/>
    <property type="protein sequence ID" value="ENSP00000360366.3"/>
    <property type="gene ID" value="ENSG00000162390.18"/>
</dbReference>
<dbReference type="GeneID" id="26027"/>
<dbReference type="KEGG" id="hsa:26027"/>
<dbReference type="MANE-Select" id="ENST00000343744.7">
    <molecule id="Q8WXI4-2"/>
    <property type="protein sequence ID" value="ENSP00000340260.2"/>
    <property type="RefSeq nucleotide sequence ID" value="NM_147161.4"/>
    <property type="RefSeq protein sequence ID" value="NP_671517.1"/>
</dbReference>
<dbReference type="UCSC" id="uc001cxl.3">
    <molecule id="Q8WXI4-1"/>
    <property type="organism name" value="human"/>
</dbReference>
<dbReference type="AGR" id="HGNC:18156"/>
<dbReference type="CTD" id="26027"/>
<dbReference type="DisGeNET" id="26027"/>
<dbReference type="GeneCards" id="ACOT11"/>
<dbReference type="HGNC" id="HGNC:18156">
    <property type="gene designation" value="ACOT11"/>
</dbReference>
<dbReference type="HPA" id="ENSG00000162390">
    <property type="expression patterns" value="Tissue enhanced (intestine)"/>
</dbReference>
<dbReference type="MIM" id="606803">
    <property type="type" value="gene"/>
</dbReference>
<dbReference type="neXtProt" id="NX_Q8WXI4"/>
<dbReference type="OpenTargets" id="ENSG00000162390"/>
<dbReference type="PharmGKB" id="PA38303"/>
<dbReference type="VEuPathDB" id="HostDB:ENSG00000162390"/>
<dbReference type="eggNOG" id="KOG2763">
    <property type="taxonomic scope" value="Eukaryota"/>
</dbReference>
<dbReference type="GeneTree" id="ENSGT00940000156460"/>
<dbReference type="HOGENOM" id="CLU_035725_0_0_1"/>
<dbReference type="InParanoid" id="Q8WXI4"/>
<dbReference type="OMA" id="YEQCEVI"/>
<dbReference type="OrthoDB" id="3184331at2759"/>
<dbReference type="PAN-GO" id="Q8WXI4">
    <property type="GO annotations" value="5 GO annotations based on evolutionary models"/>
</dbReference>
<dbReference type="PhylomeDB" id="Q8WXI4"/>
<dbReference type="TreeFam" id="TF328368"/>
<dbReference type="PathwayCommons" id="Q8WXI4"/>
<dbReference type="Reactome" id="R-HSA-77289">
    <property type="pathway name" value="Mitochondrial Fatty Acid Beta-Oxidation"/>
</dbReference>
<dbReference type="SignaLink" id="Q8WXI4"/>
<dbReference type="UniPathway" id="UPA00199"/>
<dbReference type="BioGRID-ORCS" id="26027">
    <property type="hits" value="13 hits in 1153 CRISPR screens"/>
</dbReference>
<dbReference type="ChiTaRS" id="ACOT11">
    <property type="organism name" value="human"/>
</dbReference>
<dbReference type="EvolutionaryTrace" id="Q8WXI4"/>
<dbReference type="GeneWiki" id="ACOT11"/>
<dbReference type="GenomeRNAi" id="26027"/>
<dbReference type="Pharos" id="Q8WXI4">
    <property type="development level" value="Tbio"/>
</dbReference>
<dbReference type="PRO" id="PR:Q8WXI4"/>
<dbReference type="Proteomes" id="UP000005640">
    <property type="component" value="Chromosome 1"/>
</dbReference>
<dbReference type="RNAct" id="Q8WXI4">
    <property type="molecule type" value="protein"/>
</dbReference>
<dbReference type="Bgee" id="ENSG00000162390">
    <property type="expression patterns" value="Expressed in apex of heart and 181 other cell types or tissues"/>
</dbReference>
<dbReference type="GO" id="GO:0005737">
    <property type="term" value="C:cytoplasm"/>
    <property type="evidence" value="ECO:0000314"/>
    <property type="project" value="UniProtKB"/>
</dbReference>
<dbReference type="GO" id="GO:0005829">
    <property type="term" value="C:cytosol"/>
    <property type="evidence" value="ECO:0000314"/>
    <property type="project" value="HPA"/>
</dbReference>
<dbReference type="GO" id="GO:0070062">
    <property type="term" value="C:extracellular exosome"/>
    <property type="evidence" value="ECO:0007005"/>
    <property type="project" value="UniProtKB"/>
</dbReference>
<dbReference type="GO" id="GO:0005759">
    <property type="term" value="C:mitochondrial matrix"/>
    <property type="evidence" value="ECO:0000314"/>
    <property type="project" value="UniProtKB"/>
</dbReference>
<dbReference type="GO" id="GO:0052689">
    <property type="term" value="F:carboxylic ester hydrolase activity"/>
    <property type="evidence" value="ECO:0007669"/>
    <property type="project" value="UniProtKB-KW"/>
</dbReference>
<dbReference type="GO" id="GO:0047617">
    <property type="term" value="F:fatty acyl-CoA hydrolase activity"/>
    <property type="evidence" value="ECO:0000314"/>
    <property type="project" value="UniProtKB"/>
</dbReference>
<dbReference type="GO" id="GO:0008289">
    <property type="term" value="F:lipid binding"/>
    <property type="evidence" value="ECO:0007669"/>
    <property type="project" value="InterPro"/>
</dbReference>
<dbReference type="GO" id="GO:0052816">
    <property type="term" value="F:long-chain fatty acyl-CoA hydrolase activity"/>
    <property type="evidence" value="ECO:0000314"/>
    <property type="project" value="UniProtKB"/>
</dbReference>
<dbReference type="GO" id="GO:0006637">
    <property type="term" value="P:acyl-CoA metabolic process"/>
    <property type="evidence" value="ECO:0000318"/>
    <property type="project" value="GO_Central"/>
</dbReference>
<dbReference type="GO" id="GO:0006631">
    <property type="term" value="P:fatty acid metabolic process"/>
    <property type="evidence" value="ECO:0000303"/>
    <property type="project" value="UniProtKB"/>
</dbReference>
<dbReference type="GO" id="GO:0035556">
    <property type="term" value="P:intracellular signal transduction"/>
    <property type="evidence" value="ECO:0000303"/>
    <property type="project" value="UniProtKB"/>
</dbReference>
<dbReference type="GO" id="GO:0120163">
    <property type="term" value="P:negative regulation of cold-induced thermogenesis"/>
    <property type="evidence" value="ECO:0000250"/>
    <property type="project" value="YuBioLab"/>
</dbReference>
<dbReference type="GO" id="GO:0009409">
    <property type="term" value="P:response to cold"/>
    <property type="evidence" value="ECO:0000250"/>
    <property type="project" value="BHF-UCL"/>
</dbReference>
<dbReference type="GO" id="GO:0009266">
    <property type="term" value="P:response to temperature stimulus"/>
    <property type="evidence" value="ECO:0000250"/>
    <property type="project" value="UniProtKB"/>
</dbReference>
<dbReference type="CDD" id="cd03442">
    <property type="entry name" value="BFIT_BACH"/>
    <property type="match status" value="2"/>
</dbReference>
<dbReference type="CDD" id="cd08913">
    <property type="entry name" value="START_STARD14-like"/>
    <property type="match status" value="1"/>
</dbReference>
<dbReference type="FunFam" id="3.10.129.10:FF:000011">
    <property type="entry name" value="Acyl-coenzyme A thioesterase 11"/>
    <property type="match status" value="1"/>
</dbReference>
<dbReference type="FunFam" id="3.10.129.10:FF:000020">
    <property type="entry name" value="Acyl-coenzyme A thioesterase 11"/>
    <property type="match status" value="1"/>
</dbReference>
<dbReference type="FunFam" id="3.30.530.20:FF:000012">
    <property type="entry name" value="Acyl-coenzyme A thioesterase 11"/>
    <property type="match status" value="1"/>
</dbReference>
<dbReference type="Gene3D" id="3.30.530.20">
    <property type="match status" value="1"/>
</dbReference>
<dbReference type="Gene3D" id="3.10.129.10">
    <property type="entry name" value="Hotdog Thioesterase"/>
    <property type="match status" value="2"/>
</dbReference>
<dbReference type="InterPro" id="IPR040170">
    <property type="entry name" value="Cytosol_ACT"/>
</dbReference>
<dbReference type="InterPro" id="IPR033120">
    <property type="entry name" value="HOTDOG_ACOT"/>
</dbReference>
<dbReference type="InterPro" id="IPR029069">
    <property type="entry name" value="HotDog_dom_sf"/>
</dbReference>
<dbReference type="InterPro" id="IPR023393">
    <property type="entry name" value="START-like_dom_sf"/>
</dbReference>
<dbReference type="InterPro" id="IPR002913">
    <property type="entry name" value="START_lipid-bd_dom"/>
</dbReference>
<dbReference type="InterPro" id="IPR006683">
    <property type="entry name" value="Thioestr_dom"/>
</dbReference>
<dbReference type="PANTHER" id="PTHR11049">
    <property type="entry name" value="ACYL COENZYME A THIOESTER HYDROLASE"/>
    <property type="match status" value="1"/>
</dbReference>
<dbReference type="PANTHER" id="PTHR11049:SF1">
    <property type="entry name" value="ACYL-COENZYME A THIOESTERASE 11"/>
    <property type="match status" value="1"/>
</dbReference>
<dbReference type="Pfam" id="PF03061">
    <property type="entry name" value="4HBT"/>
    <property type="match status" value="2"/>
</dbReference>
<dbReference type="Pfam" id="PF01852">
    <property type="entry name" value="START"/>
    <property type="match status" value="1"/>
</dbReference>
<dbReference type="SMART" id="SM00234">
    <property type="entry name" value="START"/>
    <property type="match status" value="1"/>
</dbReference>
<dbReference type="SUPFAM" id="SSF55961">
    <property type="entry name" value="Bet v1-like"/>
    <property type="match status" value="1"/>
</dbReference>
<dbReference type="SUPFAM" id="SSF54637">
    <property type="entry name" value="Thioesterase/thiol ester dehydrase-isomerase"/>
    <property type="match status" value="2"/>
</dbReference>
<dbReference type="PROSITE" id="PS51770">
    <property type="entry name" value="HOTDOG_ACOT"/>
    <property type="match status" value="2"/>
</dbReference>
<dbReference type="PROSITE" id="PS50848">
    <property type="entry name" value="START"/>
    <property type="match status" value="1"/>
</dbReference>
<organism>
    <name type="scientific">Homo sapiens</name>
    <name type="common">Human</name>
    <dbReference type="NCBI Taxonomy" id="9606"/>
    <lineage>
        <taxon>Eukaryota</taxon>
        <taxon>Metazoa</taxon>
        <taxon>Chordata</taxon>
        <taxon>Craniata</taxon>
        <taxon>Vertebrata</taxon>
        <taxon>Euteleostomi</taxon>
        <taxon>Mammalia</taxon>
        <taxon>Eutheria</taxon>
        <taxon>Euarchontoglires</taxon>
        <taxon>Primates</taxon>
        <taxon>Haplorrhini</taxon>
        <taxon>Catarrhini</taxon>
        <taxon>Hominidae</taxon>
        <taxon>Homo</taxon>
    </lineage>
</organism>
<reference key="1">
    <citation type="journal article" date="2001" name="Biochem. J.">
        <title>BFIT, a unique acyl-CoA thioesterase induced in thermogenic brown adipose tissue: cloning, organization of the human gene and assessment of a potential link to obesity.</title>
        <authorList>
            <person name="Adams S.H."/>
            <person name="Chui C."/>
            <person name="Schilbach S.L."/>
            <person name="Yu X.X."/>
            <person name="Goddard A.D."/>
            <person name="Grimaldi J.C."/>
            <person name="Lee J."/>
            <person name="Dowd P."/>
            <person name="Colman S."/>
            <person name="Lewin D.A."/>
        </authorList>
    </citation>
    <scope>NUCLEOTIDE SEQUENCE [MRNA] (ISOFORMS 1 AND 2)</scope>
</reference>
<reference key="2">
    <citation type="journal article" date="1998" name="DNA Res.">
        <title>Prediction of the coding sequences of unidentified human genes. X. The complete sequences of 100 new cDNA clones from brain which can code for large proteins in vitro.</title>
        <authorList>
            <person name="Ishikawa K."/>
            <person name="Nagase T."/>
            <person name="Suyama M."/>
            <person name="Miyajima N."/>
            <person name="Tanaka A."/>
            <person name="Kotani H."/>
            <person name="Nomura N."/>
            <person name="Ohara O."/>
        </authorList>
    </citation>
    <scope>NUCLEOTIDE SEQUENCE [LARGE SCALE MRNA] (ISOFORM 1)</scope>
    <source>
        <tissue>Brain</tissue>
    </source>
</reference>
<reference key="3">
    <citation type="journal article" date="2004" name="Nat. Genet.">
        <title>Complete sequencing and characterization of 21,243 full-length human cDNAs.</title>
        <authorList>
            <person name="Ota T."/>
            <person name="Suzuki Y."/>
            <person name="Nishikawa T."/>
            <person name="Otsuki T."/>
            <person name="Sugiyama T."/>
            <person name="Irie R."/>
            <person name="Wakamatsu A."/>
            <person name="Hayashi K."/>
            <person name="Sato H."/>
            <person name="Nagai K."/>
            <person name="Kimura K."/>
            <person name="Makita H."/>
            <person name="Sekine M."/>
            <person name="Obayashi M."/>
            <person name="Nishi T."/>
            <person name="Shibahara T."/>
            <person name="Tanaka T."/>
            <person name="Ishii S."/>
            <person name="Yamamoto J."/>
            <person name="Saito K."/>
            <person name="Kawai Y."/>
            <person name="Isono Y."/>
            <person name="Nakamura Y."/>
            <person name="Nagahari K."/>
            <person name="Murakami K."/>
            <person name="Yasuda T."/>
            <person name="Iwayanagi T."/>
            <person name="Wagatsuma M."/>
            <person name="Shiratori A."/>
            <person name="Sudo H."/>
            <person name="Hosoiri T."/>
            <person name="Kaku Y."/>
            <person name="Kodaira H."/>
            <person name="Kondo H."/>
            <person name="Sugawara M."/>
            <person name="Takahashi M."/>
            <person name="Kanda K."/>
            <person name="Yokoi T."/>
            <person name="Furuya T."/>
            <person name="Kikkawa E."/>
            <person name="Omura Y."/>
            <person name="Abe K."/>
            <person name="Kamihara K."/>
            <person name="Katsuta N."/>
            <person name="Sato K."/>
            <person name="Tanikawa M."/>
            <person name="Yamazaki M."/>
            <person name="Ninomiya K."/>
            <person name="Ishibashi T."/>
            <person name="Yamashita H."/>
            <person name="Murakawa K."/>
            <person name="Fujimori K."/>
            <person name="Tanai H."/>
            <person name="Kimata M."/>
            <person name="Watanabe M."/>
            <person name="Hiraoka S."/>
            <person name="Chiba Y."/>
            <person name="Ishida S."/>
            <person name="Ono Y."/>
            <person name="Takiguchi S."/>
            <person name="Watanabe S."/>
            <person name="Yosida M."/>
            <person name="Hotuta T."/>
            <person name="Kusano J."/>
            <person name="Kanehori K."/>
            <person name="Takahashi-Fujii A."/>
            <person name="Hara H."/>
            <person name="Tanase T.-O."/>
            <person name="Nomura Y."/>
            <person name="Togiya S."/>
            <person name="Komai F."/>
            <person name="Hara R."/>
            <person name="Takeuchi K."/>
            <person name="Arita M."/>
            <person name="Imose N."/>
            <person name="Musashino K."/>
            <person name="Yuuki H."/>
            <person name="Oshima A."/>
            <person name="Sasaki N."/>
            <person name="Aotsuka S."/>
            <person name="Yoshikawa Y."/>
            <person name="Matsunawa H."/>
            <person name="Ichihara T."/>
            <person name="Shiohata N."/>
            <person name="Sano S."/>
            <person name="Moriya S."/>
            <person name="Momiyama H."/>
            <person name="Satoh N."/>
            <person name="Takami S."/>
            <person name="Terashima Y."/>
            <person name="Suzuki O."/>
            <person name="Nakagawa S."/>
            <person name="Senoh A."/>
            <person name="Mizoguchi H."/>
            <person name="Goto Y."/>
            <person name="Shimizu F."/>
            <person name="Wakebe H."/>
            <person name="Hishigaki H."/>
            <person name="Watanabe T."/>
            <person name="Sugiyama A."/>
            <person name="Takemoto M."/>
            <person name="Kawakami B."/>
            <person name="Yamazaki M."/>
            <person name="Watanabe K."/>
            <person name="Kumagai A."/>
            <person name="Itakura S."/>
            <person name="Fukuzumi Y."/>
            <person name="Fujimori Y."/>
            <person name="Komiyama M."/>
            <person name="Tashiro H."/>
            <person name="Tanigami A."/>
            <person name="Fujiwara T."/>
            <person name="Ono T."/>
            <person name="Yamada K."/>
            <person name="Fujii Y."/>
            <person name="Ozaki K."/>
            <person name="Hirao M."/>
            <person name="Ohmori Y."/>
            <person name="Kawabata A."/>
            <person name="Hikiji T."/>
            <person name="Kobatake N."/>
            <person name="Inagaki H."/>
            <person name="Ikema Y."/>
            <person name="Okamoto S."/>
            <person name="Okitani R."/>
            <person name="Kawakami T."/>
            <person name="Noguchi S."/>
            <person name="Itoh T."/>
            <person name="Shigeta K."/>
            <person name="Senba T."/>
            <person name="Matsumura K."/>
            <person name="Nakajima Y."/>
            <person name="Mizuno T."/>
            <person name="Morinaga M."/>
            <person name="Sasaki M."/>
            <person name="Togashi T."/>
            <person name="Oyama M."/>
            <person name="Hata H."/>
            <person name="Watanabe M."/>
            <person name="Komatsu T."/>
            <person name="Mizushima-Sugano J."/>
            <person name="Satoh T."/>
            <person name="Shirai Y."/>
            <person name="Takahashi Y."/>
            <person name="Nakagawa K."/>
            <person name="Okumura K."/>
            <person name="Nagase T."/>
            <person name="Nomura N."/>
            <person name="Kikuchi H."/>
            <person name="Masuho Y."/>
            <person name="Yamashita R."/>
            <person name="Nakai K."/>
            <person name="Yada T."/>
            <person name="Nakamura Y."/>
            <person name="Ohara O."/>
            <person name="Isogai T."/>
            <person name="Sugano S."/>
        </authorList>
    </citation>
    <scope>NUCLEOTIDE SEQUENCE [LARGE SCALE MRNA] (ISOFORM 2)</scope>
    <source>
        <tissue>Thyroid</tissue>
    </source>
</reference>
<reference key="4">
    <citation type="submission" date="2005-04" db="EMBL/GenBank/DDBJ databases">
        <authorList>
            <person name="Totoki Y."/>
            <person name="Toyoda A."/>
            <person name="Takeda T."/>
            <person name="Sakaki Y."/>
            <person name="Tanaka A."/>
            <person name="Yokoyama S."/>
        </authorList>
    </citation>
    <scope>NUCLEOTIDE SEQUENCE [LARGE SCALE MRNA] (ISOFORM 2)</scope>
    <scope>VARIANT ASP-202</scope>
    <source>
        <tissue>Heart</tissue>
    </source>
</reference>
<reference key="5">
    <citation type="journal article" date="2006" name="Nature">
        <title>The DNA sequence and biological annotation of human chromosome 1.</title>
        <authorList>
            <person name="Gregory S.G."/>
            <person name="Barlow K.F."/>
            <person name="McLay K.E."/>
            <person name="Kaul R."/>
            <person name="Swarbreck D."/>
            <person name="Dunham A."/>
            <person name="Scott C.E."/>
            <person name="Howe K.L."/>
            <person name="Woodfine K."/>
            <person name="Spencer C.C.A."/>
            <person name="Jones M.C."/>
            <person name="Gillson C."/>
            <person name="Searle S."/>
            <person name="Zhou Y."/>
            <person name="Kokocinski F."/>
            <person name="McDonald L."/>
            <person name="Evans R."/>
            <person name="Phillips K."/>
            <person name="Atkinson A."/>
            <person name="Cooper R."/>
            <person name="Jones C."/>
            <person name="Hall R.E."/>
            <person name="Andrews T.D."/>
            <person name="Lloyd C."/>
            <person name="Ainscough R."/>
            <person name="Almeida J.P."/>
            <person name="Ambrose K.D."/>
            <person name="Anderson F."/>
            <person name="Andrew R.W."/>
            <person name="Ashwell R.I.S."/>
            <person name="Aubin K."/>
            <person name="Babbage A.K."/>
            <person name="Bagguley C.L."/>
            <person name="Bailey J."/>
            <person name="Beasley H."/>
            <person name="Bethel G."/>
            <person name="Bird C.P."/>
            <person name="Bray-Allen S."/>
            <person name="Brown J.Y."/>
            <person name="Brown A.J."/>
            <person name="Buckley D."/>
            <person name="Burton J."/>
            <person name="Bye J."/>
            <person name="Carder C."/>
            <person name="Chapman J.C."/>
            <person name="Clark S.Y."/>
            <person name="Clarke G."/>
            <person name="Clee C."/>
            <person name="Cobley V."/>
            <person name="Collier R.E."/>
            <person name="Corby N."/>
            <person name="Coville G.J."/>
            <person name="Davies J."/>
            <person name="Deadman R."/>
            <person name="Dunn M."/>
            <person name="Earthrowl M."/>
            <person name="Ellington A.G."/>
            <person name="Errington H."/>
            <person name="Frankish A."/>
            <person name="Frankland J."/>
            <person name="French L."/>
            <person name="Garner P."/>
            <person name="Garnett J."/>
            <person name="Gay L."/>
            <person name="Ghori M.R.J."/>
            <person name="Gibson R."/>
            <person name="Gilby L.M."/>
            <person name="Gillett W."/>
            <person name="Glithero R.J."/>
            <person name="Grafham D.V."/>
            <person name="Griffiths C."/>
            <person name="Griffiths-Jones S."/>
            <person name="Grocock R."/>
            <person name="Hammond S."/>
            <person name="Harrison E.S.I."/>
            <person name="Hart E."/>
            <person name="Haugen E."/>
            <person name="Heath P.D."/>
            <person name="Holmes S."/>
            <person name="Holt K."/>
            <person name="Howden P.J."/>
            <person name="Hunt A.R."/>
            <person name="Hunt S.E."/>
            <person name="Hunter G."/>
            <person name="Isherwood J."/>
            <person name="James R."/>
            <person name="Johnson C."/>
            <person name="Johnson D."/>
            <person name="Joy A."/>
            <person name="Kay M."/>
            <person name="Kershaw J.K."/>
            <person name="Kibukawa M."/>
            <person name="Kimberley A.M."/>
            <person name="King A."/>
            <person name="Knights A.J."/>
            <person name="Lad H."/>
            <person name="Laird G."/>
            <person name="Lawlor S."/>
            <person name="Leongamornlert D.A."/>
            <person name="Lloyd D.M."/>
            <person name="Loveland J."/>
            <person name="Lovell J."/>
            <person name="Lush M.J."/>
            <person name="Lyne R."/>
            <person name="Martin S."/>
            <person name="Mashreghi-Mohammadi M."/>
            <person name="Matthews L."/>
            <person name="Matthews N.S.W."/>
            <person name="McLaren S."/>
            <person name="Milne S."/>
            <person name="Mistry S."/>
            <person name="Moore M.J.F."/>
            <person name="Nickerson T."/>
            <person name="O'Dell C.N."/>
            <person name="Oliver K."/>
            <person name="Palmeiri A."/>
            <person name="Palmer S.A."/>
            <person name="Parker A."/>
            <person name="Patel D."/>
            <person name="Pearce A.V."/>
            <person name="Peck A.I."/>
            <person name="Pelan S."/>
            <person name="Phelps K."/>
            <person name="Phillimore B.J."/>
            <person name="Plumb R."/>
            <person name="Rajan J."/>
            <person name="Raymond C."/>
            <person name="Rouse G."/>
            <person name="Saenphimmachak C."/>
            <person name="Sehra H.K."/>
            <person name="Sheridan E."/>
            <person name="Shownkeen R."/>
            <person name="Sims S."/>
            <person name="Skuce C.D."/>
            <person name="Smith M."/>
            <person name="Steward C."/>
            <person name="Subramanian S."/>
            <person name="Sycamore N."/>
            <person name="Tracey A."/>
            <person name="Tromans A."/>
            <person name="Van Helmond Z."/>
            <person name="Wall M."/>
            <person name="Wallis J.M."/>
            <person name="White S."/>
            <person name="Whitehead S.L."/>
            <person name="Wilkinson J.E."/>
            <person name="Willey D.L."/>
            <person name="Williams H."/>
            <person name="Wilming L."/>
            <person name="Wray P.W."/>
            <person name="Wu Z."/>
            <person name="Coulson A."/>
            <person name="Vaudin M."/>
            <person name="Sulston J.E."/>
            <person name="Durbin R.M."/>
            <person name="Hubbard T."/>
            <person name="Wooster R."/>
            <person name="Dunham I."/>
            <person name="Carter N.P."/>
            <person name="McVean G."/>
            <person name="Ross M.T."/>
            <person name="Harrow J."/>
            <person name="Olson M.V."/>
            <person name="Beck S."/>
            <person name="Rogers J."/>
            <person name="Bentley D.R."/>
        </authorList>
    </citation>
    <scope>NUCLEOTIDE SEQUENCE [LARGE SCALE GENOMIC DNA]</scope>
</reference>
<reference key="6">
    <citation type="submission" date="2005-09" db="EMBL/GenBank/DDBJ databases">
        <authorList>
            <person name="Mural R.J."/>
            <person name="Istrail S."/>
            <person name="Sutton G.G."/>
            <person name="Florea L."/>
            <person name="Halpern A.L."/>
            <person name="Mobarry C.M."/>
            <person name="Lippert R."/>
            <person name="Walenz B."/>
            <person name="Shatkay H."/>
            <person name="Dew I."/>
            <person name="Miller J.R."/>
            <person name="Flanigan M.J."/>
            <person name="Edwards N.J."/>
            <person name="Bolanos R."/>
            <person name="Fasulo D."/>
            <person name="Halldorsson B.V."/>
            <person name="Hannenhalli S."/>
            <person name="Turner R."/>
            <person name="Yooseph S."/>
            <person name="Lu F."/>
            <person name="Nusskern D.R."/>
            <person name="Shue B.C."/>
            <person name="Zheng X.H."/>
            <person name="Zhong F."/>
            <person name="Delcher A.L."/>
            <person name="Huson D.H."/>
            <person name="Kravitz S.A."/>
            <person name="Mouchard L."/>
            <person name="Reinert K."/>
            <person name="Remington K.A."/>
            <person name="Clark A.G."/>
            <person name="Waterman M.S."/>
            <person name="Eichler E.E."/>
            <person name="Adams M.D."/>
            <person name="Hunkapiller M.W."/>
            <person name="Myers E.W."/>
            <person name="Venter J.C."/>
        </authorList>
    </citation>
    <scope>NUCLEOTIDE SEQUENCE [LARGE SCALE GENOMIC DNA]</scope>
</reference>
<reference key="7">
    <citation type="journal article" date="2004" name="Genome Res.">
        <title>The status, quality, and expansion of the NIH full-length cDNA project: the Mammalian Gene Collection (MGC).</title>
        <authorList>
            <consortium name="The MGC Project Team"/>
        </authorList>
    </citation>
    <scope>NUCLEOTIDE SEQUENCE [LARGE SCALE MRNA] (ISOFORM 2)</scope>
    <source>
        <tissue>Brain</tissue>
        <tissue>Skin</tissue>
    </source>
</reference>
<reference key="8">
    <citation type="journal article" date="2012" name="Biochemistry">
        <title>Human brown fat inducible thioesterase variant 2 cellular localization and catalytic function.</title>
        <authorList>
            <person name="Chen D."/>
            <person name="Latham J."/>
            <person name="Zhao H."/>
            <person name="Bisoffi M."/>
            <person name="Farelli J."/>
            <person name="Dunaway-Mariano D."/>
        </authorList>
    </citation>
    <scope>FUNCTION</scope>
    <scope>CATALYTIC ACTIVITY</scope>
    <scope>SUBSTRATE SPECIFICITY</scope>
    <scope>BIOPHYSICOCHEMICAL PROPERTIES</scope>
    <scope>PATHWAY</scope>
    <scope>SUBCELLULAR LOCATION</scope>
    <scope>TOPOLOGY</scope>
</reference>
<reference key="9">
    <citation type="journal article" date="2011" name="PLoS ONE">
        <title>Comparative structural analysis of lipid binding START domains.</title>
        <authorList>
            <person name="Thorsell A.G."/>
            <person name="Lee W.H."/>
            <person name="Persson C."/>
            <person name="Siponen M.I."/>
            <person name="Nilsson M."/>
            <person name="Busam R.D."/>
            <person name="Kotenyova T."/>
            <person name="Schuler H."/>
            <person name="Lehtio L."/>
        </authorList>
    </citation>
    <scope>X-RAY CRYSTALLOGRAPHY (2.0 ANGSTROMS) OF 339-543</scope>
</reference>
<keyword id="KW-0002">3D-structure</keyword>
<keyword id="KW-0025">Alternative splicing</keyword>
<keyword id="KW-0963">Cytoplasm</keyword>
<keyword id="KW-0276">Fatty acid metabolism</keyword>
<keyword id="KW-0378">Hydrolase</keyword>
<keyword id="KW-0443">Lipid metabolism</keyword>
<keyword id="KW-0496">Mitochondrion</keyword>
<keyword id="KW-0597">Phosphoprotein</keyword>
<keyword id="KW-1267">Proteomics identification</keyword>
<keyword id="KW-1185">Reference proteome</keyword>
<keyword id="KW-0677">Repeat</keyword>
<keyword id="KW-0719">Serine esterase</keyword>
<keyword id="KW-0809">Transit peptide</keyword>
<sequence>MIQNVGNHLRRGLASVFSNRTSRKSALRAGNDSAMADGEGYRNPTEVQMSQLVLPCHTNQRGELSVGQLLKWIDTTACLSAERHAGCPCVTASMDDIYFEHTISVGQVVNIKAKVNRAFNSSMEVGIQVASEDLCSEKQWNVCKALATFVARREITKVKLKQITPRTEEEKMEHSVAAERRRMRLVYADTIKDLLANCAIQGDLESRDCSRMVPAEKTRVESVELVLPPHANHQGNTFGGQIMAWMENVATIAASRLCRAHPTLKAIEMFHFRGPSQVGDRLVLKAIVNNAFKHSMEVGVCVEAYRQEAETHRRHINSAFMTFVVLDADDQPQLLPWIRPQPGDGERRYREASARKKIRLDRKYIVSCKQTEVPLSVPWDPSNQVYLSYNNVSSLKMLVAKDNWVLSSEISQVRLYTLEDDKFLSFHMEMVVHVDAAQAFLLLSDLRQRPEWDKHYRSVELVQQVDEDDAIYHVTSPALGGHTKPQDFVILASRRKPCDNGDPYVIALRSVTLPTHRETPEYRRGETLCSGFCLWREGDQLTKCCWVRVSLTELVSASGFYSWGLESRSKGRRSDGWNGKLAGGHLSTLKAIPVAKINSRFGYLQDT</sequence>
<comment type="function">
    <text evidence="6">Has an acyl-CoA thioesterase activity with a preference for the long chain fatty acyl-CoA thioesters hexadecanoyl-CoA/palmitoyl-CoA and tetradecanoyl-CoA/myristoyl-CoA which are the main substrates in the mitochondrial beta-oxidation pathway.</text>
</comment>
<comment type="catalytic activity">
    <reaction evidence="6">
        <text>hexadecanoyl-CoA + H2O = hexadecanoate + CoA + H(+)</text>
        <dbReference type="Rhea" id="RHEA:16645"/>
        <dbReference type="ChEBI" id="CHEBI:7896"/>
        <dbReference type="ChEBI" id="CHEBI:15377"/>
        <dbReference type="ChEBI" id="CHEBI:15378"/>
        <dbReference type="ChEBI" id="CHEBI:57287"/>
        <dbReference type="ChEBI" id="CHEBI:57379"/>
        <dbReference type="EC" id="3.1.2.2"/>
    </reaction>
    <physiologicalReaction direction="left-to-right" evidence="13">
        <dbReference type="Rhea" id="RHEA:16646"/>
    </physiologicalReaction>
</comment>
<comment type="catalytic activity">
    <reaction evidence="6">
        <text>tetradecanoyl-CoA + H2O = tetradecanoate + CoA + H(+)</text>
        <dbReference type="Rhea" id="RHEA:40119"/>
        <dbReference type="ChEBI" id="CHEBI:15377"/>
        <dbReference type="ChEBI" id="CHEBI:15378"/>
        <dbReference type="ChEBI" id="CHEBI:30807"/>
        <dbReference type="ChEBI" id="CHEBI:57287"/>
        <dbReference type="ChEBI" id="CHEBI:57385"/>
    </reaction>
    <physiologicalReaction direction="left-to-right" evidence="13">
        <dbReference type="Rhea" id="RHEA:40120"/>
    </physiologicalReaction>
</comment>
<comment type="catalytic activity">
    <reaction evidence="6">
        <text>dodecanoyl-CoA + H2O = dodecanoate + CoA + H(+)</text>
        <dbReference type="Rhea" id="RHEA:30135"/>
        <dbReference type="ChEBI" id="CHEBI:15377"/>
        <dbReference type="ChEBI" id="CHEBI:15378"/>
        <dbReference type="ChEBI" id="CHEBI:18262"/>
        <dbReference type="ChEBI" id="CHEBI:57287"/>
        <dbReference type="ChEBI" id="CHEBI:57375"/>
    </reaction>
    <physiologicalReaction direction="left-to-right" evidence="13">
        <dbReference type="Rhea" id="RHEA:30136"/>
    </physiologicalReaction>
</comment>
<comment type="catalytic activity">
    <reaction evidence="6">
        <text>butanoyl-CoA + H2O = butanoate + CoA + H(+)</text>
        <dbReference type="Rhea" id="RHEA:40111"/>
        <dbReference type="ChEBI" id="CHEBI:15377"/>
        <dbReference type="ChEBI" id="CHEBI:15378"/>
        <dbReference type="ChEBI" id="CHEBI:17968"/>
        <dbReference type="ChEBI" id="CHEBI:57287"/>
        <dbReference type="ChEBI" id="CHEBI:57371"/>
    </reaction>
    <physiologicalReaction direction="left-to-right" evidence="13">
        <dbReference type="Rhea" id="RHEA:40112"/>
    </physiologicalReaction>
</comment>
<comment type="biophysicochemical properties">
    <kinetics>
        <text evidence="6">kcat is 5 min(-1) for the hydrolysis of hexadecanoyl-CoA (PubMed:22897136). kcat is 3.5 min(-1) for the hydrolysis of tetradecanoyl-CoA (PubMed:22897136). kcat is 2.3 min(-1) for the hydrolysis of dodecanoyl-CoA (PubMed:22897136). kcat is 0.2 min(-1) for the hydrolysis of butanoyl-CoA (PubMed:22897136).</text>
    </kinetics>
</comment>
<comment type="pathway">
    <text evidence="13">Lipid metabolism; fatty acid metabolism.</text>
</comment>
<comment type="interaction">
    <interactant intactId="EBI-17721098">
        <id>Q8WXI4-2</id>
    </interactant>
    <interactant intactId="EBI-739879">
        <id>Q53TS8</id>
        <label>C2CD6</label>
    </interactant>
    <organismsDiffer>false</organismsDiffer>
    <experiments>3</experiments>
</comment>
<comment type="interaction">
    <interactant intactId="EBI-17721098">
        <id>Q8WXI4-2</id>
    </interactant>
    <interactant intactId="EBI-10311131">
        <id>Q9NP86</id>
        <label>CABP5</label>
    </interactant>
    <organismsDiffer>false</organismsDiffer>
    <experiments>3</experiments>
</comment>
<comment type="interaction">
    <interactant intactId="EBI-17721098">
        <id>Q8WXI4-2</id>
    </interactant>
    <interactant intactId="EBI-371876">
        <id>Q9NQT4</id>
        <label>EXOSC5</label>
    </interactant>
    <organismsDiffer>false</organismsDiffer>
    <experiments>3</experiments>
</comment>
<comment type="interaction">
    <interactant intactId="EBI-17721098">
        <id>Q8WXI4-2</id>
    </interactant>
    <interactant intactId="EBI-752301">
        <id>Q8WXD5</id>
        <label>GEMIN6</label>
    </interactant>
    <organismsDiffer>false</organismsDiffer>
    <experiments>3</experiments>
</comment>
<comment type="interaction">
    <interactant intactId="EBI-17721098">
        <id>Q8WXI4-2</id>
    </interactant>
    <interactant intactId="EBI-12094670">
        <id>Q8WUI4-6</id>
        <label>HDAC7</label>
    </interactant>
    <organismsDiffer>false</organismsDiffer>
    <experiments>3</experiments>
</comment>
<comment type="interaction">
    <interactant intactId="EBI-17721098">
        <id>Q8WXI4-2</id>
    </interactant>
    <interactant intactId="EBI-740220">
        <id>O14964</id>
        <label>HGS</label>
    </interactant>
    <organismsDiffer>false</organismsDiffer>
    <experiments>3</experiments>
</comment>
<comment type="interaction">
    <interactant intactId="EBI-17721098">
        <id>Q8WXI4-2</id>
    </interactant>
    <interactant intactId="EBI-751857">
        <id>O15481</id>
        <label>MAGEB4</label>
    </interactant>
    <organismsDiffer>false</organismsDiffer>
    <experiments>3</experiments>
</comment>
<comment type="interaction">
    <interactant intactId="EBI-17721098">
        <id>Q8WXI4-2</id>
    </interactant>
    <interactant intactId="EBI-2340269">
        <id>Q13064</id>
        <label>MKRN3</label>
    </interactant>
    <organismsDiffer>false</organismsDiffer>
    <experiments>3</experiments>
</comment>
<comment type="interaction">
    <interactant intactId="EBI-17721098">
        <id>Q8WXI4-2</id>
    </interactant>
    <interactant intactId="EBI-3921347">
        <id>P51687</id>
        <label>SUOX</label>
    </interactant>
    <organismsDiffer>false</organismsDiffer>
    <experiments>3</experiments>
</comment>
<comment type="subcellular location">
    <subcellularLocation>
        <location evidence="6">Mitochondrion matrix</location>
    </subcellularLocation>
    <subcellularLocation>
        <location evidence="6">Cytoplasm</location>
    </subcellularLocation>
</comment>
<comment type="alternative products">
    <event type="alternative splicing"/>
    <isoform>
        <id>Q8WXI4-1</id>
        <name>1</name>
        <name>BFIT1</name>
        <sequence type="displayed"/>
    </isoform>
    <isoform>
        <id>Q8WXI4-2</id>
        <name>2</name>
        <name>BFIT2</name>
        <sequence type="described" ref="VSP_000160"/>
    </isoform>
</comment>
<comment type="tissue specificity">
    <text>Isoform 1 is predominantly expressed in skeletal muscle, liver, testis, stomach, spleen, lung and brain. Isoform 2 is predominantly expressed in kidney, uterus, hibernoma and white adipose tissue.</text>
</comment>
<comment type="induction">
    <text>By cold exposure and repressed by heat exposure.</text>
</comment>
<comment type="sequence caution" evidence="12">
    <conflict type="erroneous initiation">
        <sequence resource="EMBL-CDS" id="BAA31682"/>
    </conflict>
</comment>
<name>ACO11_HUMAN</name>
<feature type="transit peptide" description="Mitochondrion" evidence="3">
    <location>
        <begin position="1"/>
        <end position="13"/>
    </location>
</feature>
<feature type="chain" id="PRO_0000053813" description="Acyl-coenzyme A thioesterase 11">
    <location>
        <begin position="14"/>
        <end position="607"/>
    </location>
</feature>
<feature type="domain" description="HotDog ACOT-type 1" evidence="5">
    <location>
        <begin position="43"/>
        <end position="155"/>
    </location>
</feature>
<feature type="domain" description="HotDog ACOT-type 2" evidence="5">
    <location>
        <begin position="216"/>
        <end position="329"/>
    </location>
</feature>
<feature type="domain" description="START" evidence="4">
    <location>
        <begin position="375"/>
        <end position="585"/>
    </location>
</feature>
<feature type="binding site" evidence="1">
    <location>
        <begin position="91"/>
        <end position="93"/>
    </location>
    <ligand>
        <name>CoA</name>
        <dbReference type="ChEBI" id="CHEBI:57287"/>
    </ligand>
</feature>
<feature type="binding site" evidence="1">
    <location>
        <begin position="120"/>
        <end position="122"/>
    </location>
    <ligand>
        <name>CoA</name>
        <dbReference type="ChEBI" id="CHEBI:57287"/>
    </ligand>
</feature>
<feature type="binding site" evidence="1">
    <location>
        <position position="181"/>
    </location>
    <ligand>
        <name>CoA</name>
        <dbReference type="ChEBI" id="CHEBI:57287"/>
    </ligand>
</feature>
<feature type="binding site" evidence="1">
    <location>
        <begin position="271"/>
        <end position="273"/>
    </location>
    <ligand>
        <name>CoA</name>
        <dbReference type="ChEBI" id="CHEBI:57287"/>
    </ligand>
</feature>
<feature type="modified residue" description="Phosphoserine" evidence="2">
    <location>
        <position position="15"/>
    </location>
</feature>
<feature type="modified residue" description="Phosphoserine" evidence="2">
    <location>
        <position position="25"/>
    </location>
</feature>
<feature type="splice variant" id="VSP_000160" description="In isoform 2." evidence="8 9 10 11">
    <original>CCWVRVSLTELVSASGFYSWGLESRSKGRRSDGWNGKLAGGHLSTLKAIPVAKINSRFGYLQDT</original>
    <variation>VSYYNQATPGVLNYVTTNVAGLSSEFYTTFKACEQFLLDNRNDLAPSLQTL</variation>
    <location>
        <begin position="544"/>
        <end position="607"/>
    </location>
</feature>
<feature type="sequence variant" id="VAR_048190" description="In dbSNP:rs34630746.">
    <original>R</original>
    <variation>W</variation>
    <location>
        <position position="11"/>
    </location>
</feature>
<feature type="sequence variant" id="VAR_022119" description="In dbSNP:rs2304306.">
    <original>P</original>
    <variation>L</variation>
    <location>
        <position position="165"/>
    </location>
</feature>
<feature type="sequence variant" id="VAR_022120" description="In dbSNP:rs1702003." evidence="7">
    <original>G</original>
    <variation>D</variation>
    <location>
        <position position="202"/>
    </location>
</feature>
<feature type="sequence variant" id="VAR_022121" description="In dbSNP:rs2304305.">
    <original>M</original>
    <variation>I</variation>
    <location>
        <position position="212"/>
    </location>
</feature>
<feature type="sequence variant" id="VAR_048191" description="In dbSNP:rs12403630.">
    <original>R</original>
    <variation>H</variation>
    <location>
        <position position="536"/>
    </location>
</feature>
<feature type="sequence conflict" description="In Ref. 7; AAH01517." evidence="12" ref="7">
    <original>S</original>
    <variation>R</variation>
    <location>
        <position position="255"/>
    </location>
</feature>
<feature type="sequence conflict" description="In Ref. 4; BAD97290." evidence="12" ref="4">
    <original>R</original>
    <variation>W</variation>
    <location>
        <position position="348"/>
    </location>
</feature>
<feature type="helix" evidence="14">
    <location>
        <begin position="347"/>
        <end position="363"/>
    </location>
</feature>
<feature type="turn" evidence="14">
    <location>
        <begin position="370"/>
        <end position="372"/>
    </location>
</feature>
<feature type="strand" evidence="14">
    <location>
        <begin position="375"/>
        <end position="378"/>
    </location>
</feature>
<feature type="helix" evidence="14">
    <location>
        <begin position="381"/>
        <end position="383"/>
    </location>
</feature>
<feature type="helix" evidence="14">
    <location>
        <begin position="384"/>
        <end position="399"/>
    </location>
</feature>
<feature type="strand" evidence="14">
    <location>
        <begin position="405"/>
        <end position="410"/>
    </location>
</feature>
<feature type="strand" evidence="14">
    <location>
        <begin position="413"/>
        <end position="419"/>
    </location>
</feature>
<feature type="strand" evidence="14">
    <location>
        <begin position="424"/>
        <end position="434"/>
    </location>
</feature>
<feature type="helix" evidence="14">
    <location>
        <begin position="436"/>
        <end position="444"/>
    </location>
</feature>
<feature type="helix" evidence="14">
    <location>
        <begin position="446"/>
        <end position="451"/>
    </location>
</feature>
<feature type="strand" evidence="14">
    <location>
        <begin position="458"/>
        <end position="466"/>
    </location>
</feature>
<feature type="strand" evidence="14">
    <location>
        <begin position="469"/>
        <end position="476"/>
    </location>
</feature>
<feature type="strand" evidence="14">
    <location>
        <begin position="486"/>
        <end position="495"/>
    </location>
</feature>
<feature type="strand" evidence="14">
    <location>
        <begin position="504"/>
        <end position="512"/>
    </location>
</feature>
<feature type="strand" evidence="15">
    <location>
        <begin position="514"/>
        <end position="516"/>
    </location>
</feature>
<feature type="strand" evidence="14">
    <location>
        <begin position="522"/>
        <end position="524"/>
    </location>
</feature>
<feature type="strand" evidence="14">
    <location>
        <begin position="528"/>
        <end position="538"/>
    </location>
</feature>
<feature type="strand" evidence="14">
    <location>
        <begin position="541"/>
        <end position="543"/>
    </location>
</feature>
<gene>
    <name type="primary">ACOT11</name>
    <name type="synonym">BFIT</name>
    <name type="synonym">KIAA0707</name>
    <name type="synonym">THEA</name>
</gene>
<evidence type="ECO:0000250" key="1"/>
<evidence type="ECO:0000250" key="2">
    <source>
        <dbReference type="UniProtKB" id="Q8VHQ9"/>
    </source>
</evidence>
<evidence type="ECO:0000255" key="3"/>
<evidence type="ECO:0000255" key="4">
    <source>
        <dbReference type="PROSITE-ProRule" id="PRU00197"/>
    </source>
</evidence>
<evidence type="ECO:0000255" key="5">
    <source>
        <dbReference type="PROSITE-ProRule" id="PRU01106"/>
    </source>
</evidence>
<evidence type="ECO:0000269" key="6">
    <source>
    </source>
</evidence>
<evidence type="ECO:0000269" key="7">
    <source ref="4"/>
</evidence>
<evidence type="ECO:0000303" key="8">
    <source>
    </source>
</evidence>
<evidence type="ECO:0000303" key="9">
    <source>
    </source>
</evidence>
<evidence type="ECO:0000303" key="10">
    <source>
    </source>
</evidence>
<evidence type="ECO:0000303" key="11">
    <source ref="4"/>
</evidence>
<evidence type="ECO:0000305" key="12"/>
<evidence type="ECO:0000305" key="13">
    <source>
    </source>
</evidence>
<evidence type="ECO:0007829" key="14">
    <source>
        <dbReference type="PDB" id="3FO5"/>
    </source>
</evidence>
<evidence type="ECO:0007829" key="15">
    <source>
        <dbReference type="PDB" id="6VVQ"/>
    </source>
</evidence>
<protein>
    <recommendedName>
        <fullName evidence="13">Acyl-coenzyme A thioesterase 11</fullName>
        <shortName evidence="13">Acyl-CoA thioesterase 11</shortName>
        <ecNumber evidence="6">3.1.2.-</ecNumber>
    </recommendedName>
    <alternativeName>
        <fullName>Acyl-CoA thioester hydrolase 11</fullName>
    </alternativeName>
    <alternativeName>
        <fullName>Adipose-associated thioesterase</fullName>
    </alternativeName>
    <alternativeName>
        <fullName>Brown fat-inducible thioesterase</fullName>
        <shortName>BFIT</shortName>
    </alternativeName>
    <alternativeName>
        <fullName evidence="13">Palmitoyl-coenzyme A thioesterase</fullName>
        <ecNumber evidence="6">3.1.2.2</ecNumber>
    </alternativeName>
</protein>
<accession>Q8WXI4</accession>
<accession>B1AQ22</accession>
<accession>D3DQ50</accession>
<accession>O75187</accession>
<accession>Q52LP1</accession>
<accession>Q53ER9</accession>
<accession>Q96DI1</accession>
<accession>Q9H883</accession>